<sequence>MLDIIIAVIIDWIIGDPYWFPHPVIYIGKLIKMLEKLGRRFFKQDKWLLVFGGFIVIIVSSISFLIPFIILQGVKKFQVIYHVINIFFLWTVLAAKSLHKEGKKVYTALEKKDIEDARLKLSYIVGRQTEGLSKKEIIRADVETIAENSSDGIIAPLLFAMLGGAPLAMMYKGINTMDSMLGYMNFKYRYIGFFPAKIDDLFNFIPARVTGIIMCLVSPIIGGNIFYSIKIMLRDRKNHKSPNCAYPEAAAAAASGIMLGGTNIYFGEVVEKPTIGEEKNELSDFHITKTIILMYSSEILFIIIYVIIICFLGKH</sequence>
<name>COBD_CLOAB</name>
<reference key="1">
    <citation type="journal article" date="2001" name="J. Bacteriol.">
        <title>Genome sequence and comparative analysis of the solvent-producing bacterium Clostridium acetobutylicum.</title>
        <authorList>
            <person name="Noelling J."/>
            <person name="Breton G."/>
            <person name="Omelchenko M.V."/>
            <person name="Makarova K.S."/>
            <person name="Zeng Q."/>
            <person name="Gibson R."/>
            <person name="Lee H.M."/>
            <person name="Dubois J."/>
            <person name="Qiu D."/>
            <person name="Hitti J."/>
            <person name="Wolf Y.I."/>
            <person name="Tatusov R.L."/>
            <person name="Sabathe F."/>
            <person name="Doucette-Stamm L.A."/>
            <person name="Soucaille P."/>
            <person name="Daly M.J."/>
            <person name="Bennett G.N."/>
            <person name="Koonin E.V."/>
            <person name="Smith D.R."/>
        </authorList>
    </citation>
    <scope>NUCLEOTIDE SEQUENCE [LARGE SCALE GENOMIC DNA]</scope>
    <source>
        <strain>ATCC 824 / DSM 792 / JCM 1419 / IAM 19013 / LMG 5710 / NBRC 13948 / NRRL B-527 / VKM B-1787 / 2291 / W</strain>
    </source>
</reference>
<gene>
    <name evidence="1" type="primary">cobD</name>
    <name type="ordered locus">CA_C0582</name>
</gene>
<comment type="function">
    <text evidence="1">Converts cobyric acid to cobinamide by the addition of aminopropanol on the F carboxylic group.</text>
</comment>
<comment type="pathway">
    <text evidence="1">Cofactor biosynthesis; adenosylcobalamin biosynthesis.</text>
</comment>
<comment type="subcellular location">
    <subcellularLocation>
        <location evidence="1">Cell membrane</location>
        <topology evidence="1">Multi-pass membrane protein</topology>
    </subcellularLocation>
</comment>
<comment type="similarity">
    <text evidence="1">Belongs to the CobD/CbiB family.</text>
</comment>
<accession>Q97LH9</accession>
<organism>
    <name type="scientific">Clostridium acetobutylicum (strain ATCC 824 / DSM 792 / JCM 1419 / IAM 19013 / LMG 5710 / NBRC 13948 / NRRL B-527 / VKM B-1787 / 2291 / W)</name>
    <dbReference type="NCBI Taxonomy" id="272562"/>
    <lineage>
        <taxon>Bacteria</taxon>
        <taxon>Bacillati</taxon>
        <taxon>Bacillota</taxon>
        <taxon>Clostridia</taxon>
        <taxon>Eubacteriales</taxon>
        <taxon>Clostridiaceae</taxon>
        <taxon>Clostridium</taxon>
    </lineage>
</organism>
<dbReference type="EMBL" id="AE001437">
    <property type="protein sequence ID" value="AAK78560.1"/>
    <property type="molecule type" value="Genomic_DNA"/>
</dbReference>
<dbReference type="PIR" id="E96971">
    <property type="entry name" value="E96971"/>
</dbReference>
<dbReference type="RefSeq" id="NP_347220.1">
    <property type="nucleotide sequence ID" value="NC_003030.1"/>
</dbReference>
<dbReference type="STRING" id="272562.CA_C0582"/>
<dbReference type="KEGG" id="cac:CA_C0582"/>
<dbReference type="PATRIC" id="fig|272562.8.peg.785"/>
<dbReference type="eggNOG" id="COG1270">
    <property type="taxonomic scope" value="Bacteria"/>
</dbReference>
<dbReference type="HOGENOM" id="CLU_054212_0_0_9"/>
<dbReference type="OrthoDB" id="9811967at2"/>
<dbReference type="UniPathway" id="UPA00148"/>
<dbReference type="Proteomes" id="UP000000814">
    <property type="component" value="Chromosome"/>
</dbReference>
<dbReference type="GO" id="GO:0005886">
    <property type="term" value="C:plasma membrane"/>
    <property type="evidence" value="ECO:0007669"/>
    <property type="project" value="UniProtKB-SubCell"/>
</dbReference>
<dbReference type="GO" id="GO:0015420">
    <property type="term" value="F:ABC-type vitamin B12 transporter activity"/>
    <property type="evidence" value="ECO:0007669"/>
    <property type="project" value="UniProtKB-UniRule"/>
</dbReference>
<dbReference type="GO" id="GO:0048472">
    <property type="term" value="F:threonine-phosphate decarboxylase activity"/>
    <property type="evidence" value="ECO:0007669"/>
    <property type="project" value="InterPro"/>
</dbReference>
<dbReference type="GO" id="GO:0009236">
    <property type="term" value="P:cobalamin biosynthetic process"/>
    <property type="evidence" value="ECO:0007669"/>
    <property type="project" value="UniProtKB-UniRule"/>
</dbReference>
<dbReference type="HAMAP" id="MF_00024">
    <property type="entry name" value="CobD_CbiB"/>
    <property type="match status" value="1"/>
</dbReference>
<dbReference type="InterPro" id="IPR004485">
    <property type="entry name" value="Cobalamin_biosynth_CobD/CbiB"/>
</dbReference>
<dbReference type="NCBIfam" id="TIGR00380">
    <property type="entry name" value="cobal_cbiB"/>
    <property type="match status" value="1"/>
</dbReference>
<dbReference type="PANTHER" id="PTHR34308">
    <property type="entry name" value="COBALAMIN BIOSYNTHESIS PROTEIN CBIB"/>
    <property type="match status" value="1"/>
</dbReference>
<dbReference type="PANTHER" id="PTHR34308:SF1">
    <property type="entry name" value="COBALAMIN BIOSYNTHESIS PROTEIN CBIB"/>
    <property type="match status" value="1"/>
</dbReference>
<dbReference type="Pfam" id="PF03186">
    <property type="entry name" value="CobD_Cbib"/>
    <property type="match status" value="1"/>
</dbReference>
<proteinExistence type="inferred from homology"/>
<keyword id="KW-1003">Cell membrane</keyword>
<keyword id="KW-0169">Cobalamin biosynthesis</keyword>
<keyword id="KW-0472">Membrane</keyword>
<keyword id="KW-1185">Reference proteome</keyword>
<keyword id="KW-0812">Transmembrane</keyword>
<keyword id="KW-1133">Transmembrane helix</keyword>
<protein>
    <recommendedName>
        <fullName evidence="1">Cobalamin biosynthesis protein CobD</fullName>
    </recommendedName>
</protein>
<evidence type="ECO:0000255" key="1">
    <source>
        <dbReference type="HAMAP-Rule" id="MF_00024"/>
    </source>
</evidence>
<feature type="chain" id="PRO_0000150924" description="Cobalamin biosynthesis protein CobD">
    <location>
        <begin position="1"/>
        <end position="315"/>
    </location>
</feature>
<feature type="transmembrane region" description="Helical" evidence="1">
    <location>
        <begin position="1"/>
        <end position="21"/>
    </location>
</feature>
<feature type="transmembrane region" description="Helical" evidence="1">
    <location>
        <begin position="50"/>
        <end position="70"/>
    </location>
</feature>
<feature type="transmembrane region" description="Helical" evidence="1">
    <location>
        <begin position="79"/>
        <end position="99"/>
    </location>
</feature>
<feature type="transmembrane region" description="Helical" evidence="1">
    <location>
        <begin position="151"/>
        <end position="171"/>
    </location>
</feature>
<feature type="transmembrane region" description="Helical" evidence="1">
    <location>
        <begin position="209"/>
        <end position="229"/>
    </location>
</feature>
<feature type="transmembrane region" description="Helical" evidence="1">
    <location>
        <begin position="250"/>
        <end position="270"/>
    </location>
</feature>
<feature type="transmembrane region" description="Helical" evidence="1">
    <location>
        <begin position="291"/>
        <end position="311"/>
    </location>
</feature>